<reference key="1">
    <citation type="submission" date="2007-10" db="EMBL/GenBank/DDBJ databases">
        <title>Complete sequence of Caldivirga maquilingensis IC-167.</title>
        <authorList>
            <consortium name="US DOE Joint Genome Institute"/>
            <person name="Copeland A."/>
            <person name="Lucas S."/>
            <person name="Lapidus A."/>
            <person name="Barry K."/>
            <person name="Glavina del Rio T."/>
            <person name="Dalin E."/>
            <person name="Tice H."/>
            <person name="Pitluck S."/>
            <person name="Saunders E."/>
            <person name="Brettin T."/>
            <person name="Bruce D."/>
            <person name="Detter J.C."/>
            <person name="Han C."/>
            <person name="Schmutz J."/>
            <person name="Larimer F."/>
            <person name="Land M."/>
            <person name="Hauser L."/>
            <person name="Kyrpides N."/>
            <person name="Ivanova N."/>
            <person name="Biddle J.F."/>
            <person name="Zhang Z."/>
            <person name="Fitz-Gibbon S.T."/>
            <person name="Lowe T.M."/>
            <person name="Saltikov C."/>
            <person name="House C.H."/>
            <person name="Richardson P."/>
        </authorList>
    </citation>
    <scope>NUCLEOTIDE SEQUENCE [LARGE SCALE GENOMIC DNA]</scope>
    <source>
        <strain>ATCC 700844 / DSM 13496 / JCM 10307 / IC-167</strain>
    </source>
</reference>
<gene>
    <name evidence="1" type="primary">dtdA</name>
    <name type="ordered locus">Cmaq_0773</name>
</gene>
<comment type="function">
    <text evidence="1">D-aminoacyl-tRNA deacylase with broad substrate specificity. By recycling D-aminoacyl-tRNA to D-amino acids and free tRNA molecules, this enzyme counteracts the toxicity associated with the formation of D-aminoacyl-tRNA entities in vivo.</text>
</comment>
<comment type="catalytic activity">
    <reaction evidence="1">
        <text>a D-aminoacyl-tRNA + H2O = a tRNA + a D-alpha-amino acid + H(+)</text>
        <dbReference type="Rhea" id="RHEA:13953"/>
        <dbReference type="Rhea" id="RHEA-COMP:10123"/>
        <dbReference type="Rhea" id="RHEA-COMP:10124"/>
        <dbReference type="ChEBI" id="CHEBI:15377"/>
        <dbReference type="ChEBI" id="CHEBI:15378"/>
        <dbReference type="ChEBI" id="CHEBI:59871"/>
        <dbReference type="ChEBI" id="CHEBI:78442"/>
        <dbReference type="ChEBI" id="CHEBI:79333"/>
        <dbReference type="EC" id="3.1.1.96"/>
    </reaction>
</comment>
<comment type="catalytic activity">
    <reaction evidence="1">
        <text>glycyl-tRNA(Ala) + H2O = tRNA(Ala) + glycine + H(+)</text>
        <dbReference type="Rhea" id="RHEA:53744"/>
        <dbReference type="Rhea" id="RHEA-COMP:9657"/>
        <dbReference type="Rhea" id="RHEA-COMP:13640"/>
        <dbReference type="ChEBI" id="CHEBI:15377"/>
        <dbReference type="ChEBI" id="CHEBI:15378"/>
        <dbReference type="ChEBI" id="CHEBI:57305"/>
        <dbReference type="ChEBI" id="CHEBI:78442"/>
        <dbReference type="ChEBI" id="CHEBI:78522"/>
        <dbReference type="EC" id="3.1.1.96"/>
    </reaction>
</comment>
<comment type="cofactor">
    <cofactor evidence="1">
        <name>Zn(2+)</name>
        <dbReference type="ChEBI" id="CHEBI:29105"/>
    </cofactor>
    <text evidence="1">Binds 2 Zn(2+) ions per subunit.</text>
</comment>
<comment type="subunit">
    <text evidence="1">Monomer.</text>
</comment>
<comment type="similarity">
    <text evidence="1">Belongs to the DtdA deacylase family.</text>
</comment>
<dbReference type="EC" id="3.1.1.96" evidence="1"/>
<dbReference type="EMBL" id="CP000852">
    <property type="protein sequence ID" value="ABW01608.1"/>
    <property type="molecule type" value="Genomic_DNA"/>
</dbReference>
<dbReference type="RefSeq" id="WP_012185827.1">
    <property type="nucleotide sequence ID" value="NC_009954.1"/>
</dbReference>
<dbReference type="SMR" id="A8MCV2"/>
<dbReference type="STRING" id="397948.Cmaq_0773"/>
<dbReference type="GeneID" id="5708529"/>
<dbReference type="KEGG" id="cma:Cmaq_0773"/>
<dbReference type="eggNOG" id="arCOG01616">
    <property type="taxonomic scope" value="Archaea"/>
</dbReference>
<dbReference type="HOGENOM" id="CLU_056464_1_0_2"/>
<dbReference type="OrthoDB" id="9863at2157"/>
<dbReference type="Proteomes" id="UP000001137">
    <property type="component" value="Chromosome"/>
</dbReference>
<dbReference type="GO" id="GO:0051499">
    <property type="term" value="F:D-aminoacyl-tRNA deacylase activity"/>
    <property type="evidence" value="ECO:0007669"/>
    <property type="project" value="UniProtKB-UniRule"/>
</dbReference>
<dbReference type="GO" id="GO:0008270">
    <property type="term" value="F:zinc ion binding"/>
    <property type="evidence" value="ECO:0007669"/>
    <property type="project" value="UniProtKB-UniRule"/>
</dbReference>
<dbReference type="GO" id="GO:0019478">
    <property type="term" value="P:D-amino acid catabolic process"/>
    <property type="evidence" value="ECO:0007669"/>
    <property type="project" value="UniProtKB-UniRule"/>
</dbReference>
<dbReference type="Gene3D" id="3.40.50.10700">
    <property type="entry name" value="AF0625-like"/>
    <property type="match status" value="1"/>
</dbReference>
<dbReference type="Gene3D" id="3.40.630.50">
    <property type="entry name" value="AF0625-like"/>
    <property type="match status" value="1"/>
</dbReference>
<dbReference type="HAMAP" id="MF_00562">
    <property type="entry name" value="Deacylase_DtdA"/>
    <property type="match status" value="1"/>
</dbReference>
<dbReference type="InterPro" id="IPR018033">
    <property type="entry name" value="Deacylase_DtdA_archaea"/>
</dbReference>
<dbReference type="InterPro" id="IPR007508">
    <property type="entry name" value="DtdA"/>
</dbReference>
<dbReference type="PANTHER" id="PTHR34667">
    <property type="entry name" value="D-AMINOACYL-TRNA DEACYLASE"/>
    <property type="match status" value="1"/>
</dbReference>
<dbReference type="PANTHER" id="PTHR34667:SF1">
    <property type="entry name" value="D-AMINOACYL-TRNA DEACYLASE"/>
    <property type="match status" value="1"/>
</dbReference>
<dbReference type="Pfam" id="PF04414">
    <property type="entry name" value="tRNA_deacylase"/>
    <property type="match status" value="1"/>
</dbReference>
<dbReference type="PIRSF" id="PIRSF016210">
    <property type="entry name" value="UCP016210"/>
    <property type="match status" value="1"/>
</dbReference>
<dbReference type="SUPFAM" id="SSF142535">
    <property type="entry name" value="AF0625-like"/>
    <property type="match status" value="1"/>
</dbReference>
<name>DTDA_CALMQ</name>
<accession>A8MCV2</accession>
<keyword id="KW-0378">Hydrolase</keyword>
<keyword id="KW-0479">Metal-binding</keyword>
<keyword id="KW-1185">Reference proteome</keyword>
<keyword id="KW-0862">Zinc</keyword>
<protein>
    <recommendedName>
        <fullName evidence="1">D-aminoacyl-tRNA deacylase</fullName>
        <ecNumber evidence="1">3.1.1.96</ecNumber>
    </recommendedName>
    <alternativeName>
        <fullName>D-tyrosyl-tRNA(Tyr) deacylase</fullName>
    </alternativeName>
</protein>
<organism>
    <name type="scientific">Caldivirga maquilingensis (strain ATCC 700844 / DSM 13496 / JCM 10307 / IC-167)</name>
    <dbReference type="NCBI Taxonomy" id="397948"/>
    <lineage>
        <taxon>Archaea</taxon>
        <taxon>Thermoproteota</taxon>
        <taxon>Thermoprotei</taxon>
        <taxon>Thermoproteales</taxon>
        <taxon>Thermoproteaceae</taxon>
        <taxon>Caldivirga</taxon>
    </lineage>
</organism>
<evidence type="ECO:0000255" key="1">
    <source>
        <dbReference type="HAMAP-Rule" id="MF_00562"/>
    </source>
</evidence>
<proteinExistence type="inferred from homology"/>
<sequence>MKIGLIVSRVDEASIGIWSMLKGMVKFKEINTNEYSSDLALALVSDKDIVYVDEADEWARVNDIDLLLFLSRHEMKNPKPLITFHTPGNWTNDVELGGKPGQVAISEPRVLTNLFREAYRRIGELNGYSVTLEATHHGPFVDKPVVFVEIGSTSNEWRDPKAQEFLASLVFDLLNNTDKYINDGKDAAVSIGDLHYTTLVNHIINGEYDVGHMVPKYIKPTPTIIKMAVERNTVRPRIGIIHWKSLDAESRVMSEKELSNLGLTVIKRR</sequence>
<feature type="chain" id="PRO_0000345206" description="D-aminoacyl-tRNA deacylase">
    <location>
        <begin position="1"/>
        <end position="269"/>
    </location>
</feature>